<reference key="1">
    <citation type="journal article" date="2008" name="J. Bacteriol.">
        <title>Insights into the environmental resistance gene pool from the genome sequence of the multidrug-resistant environmental isolate Escherichia coli SMS-3-5.</title>
        <authorList>
            <person name="Fricke W.F."/>
            <person name="Wright M.S."/>
            <person name="Lindell A.H."/>
            <person name="Harkins D.M."/>
            <person name="Baker-Austin C."/>
            <person name="Ravel J."/>
            <person name="Stepanauskas R."/>
        </authorList>
    </citation>
    <scope>NUCLEOTIDE SEQUENCE [LARGE SCALE GENOMIC DNA]</scope>
    <source>
        <strain>SMS-3-5 / SECEC</strain>
    </source>
</reference>
<evidence type="ECO:0000255" key="1">
    <source>
        <dbReference type="HAMAP-Rule" id="MF_01872"/>
    </source>
</evidence>
<dbReference type="EC" id="2.1.1.223" evidence="1"/>
<dbReference type="EMBL" id="CP000970">
    <property type="protein sequence ID" value="ACB15596.1"/>
    <property type="molecule type" value="Genomic_DNA"/>
</dbReference>
<dbReference type="SMR" id="B1LP88"/>
<dbReference type="KEGG" id="ecm:EcSMS35_2727"/>
<dbReference type="HOGENOM" id="CLU_061983_0_0_6"/>
<dbReference type="Proteomes" id="UP000007011">
    <property type="component" value="Chromosome"/>
</dbReference>
<dbReference type="GO" id="GO:0005737">
    <property type="term" value="C:cytoplasm"/>
    <property type="evidence" value="ECO:0007669"/>
    <property type="project" value="UniProtKB-SubCell"/>
</dbReference>
<dbReference type="GO" id="GO:0003676">
    <property type="term" value="F:nucleic acid binding"/>
    <property type="evidence" value="ECO:0007669"/>
    <property type="project" value="InterPro"/>
</dbReference>
<dbReference type="GO" id="GO:0016430">
    <property type="term" value="F:tRNA (adenine-N6)-methyltransferase activity"/>
    <property type="evidence" value="ECO:0007669"/>
    <property type="project" value="UniProtKB-UniRule"/>
</dbReference>
<dbReference type="GO" id="GO:0032259">
    <property type="term" value="P:methylation"/>
    <property type="evidence" value="ECO:0007669"/>
    <property type="project" value="UniProtKB-KW"/>
</dbReference>
<dbReference type="GO" id="GO:0008033">
    <property type="term" value="P:tRNA processing"/>
    <property type="evidence" value="ECO:0007669"/>
    <property type="project" value="UniProtKB-UniRule"/>
</dbReference>
<dbReference type="CDD" id="cd02440">
    <property type="entry name" value="AdoMet_MTases"/>
    <property type="match status" value="1"/>
</dbReference>
<dbReference type="FunFam" id="3.40.50.150:FF:000087">
    <property type="entry name" value="tRNA1(Val) (adenine(37)-N6)-methyltransferase"/>
    <property type="match status" value="1"/>
</dbReference>
<dbReference type="Gene3D" id="3.40.50.150">
    <property type="entry name" value="Vaccinia Virus protein VP39"/>
    <property type="match status" value="1"/>
</dbReference>
<dbReference type="HAMAP" id="MF_01872">
    <property type="entry name" value="tRNA_methyltr_YfiC"/>
    <property type="match status" value="1"/>
</dbReference>
<dbReference type="InterPro" id="IPR002052">
    <property type="entry name" value="DNA_methylase_N6_adenine_CS"/>
</dbReference>
<dbReference type="InterPro" id="IPR029063">
    <property type="entry name" value="SAM-dependent_MTases_sf"/>
</dbReference>
<dbReference type="InterPro" id="IPR007848">
    <property type="entry name" value="Small_mtfrase_dom"/>
</dbReference>
<dbReference type="InterPro" id="IPR050210">
    <property type="entry name" value="tRNA_Adenine-N(6)_MTase"/>
</dbReference>
<dbReference type="InterPro" id="IPR022882">
    <property type="entry name" value="tRNA_adenine-N6_MeTrfase"/>
</dbReference>
<dbReference type="NCBIfam" id="NF047853">
    <property type="entry name" value="tRm6a37MtseTrmN"/>
    <property type="match status" value="1"/>
</dbReference>
<dbReference type="PANTHER" id="PTHR47739">
    <property type="entry name" value="TRNA1(VAL) (ADENINE(37)-N6)-METHYLTRANSFERASE"/>
    <property type="match status" value="1"/>
</dbReference>
<dbReference type="PANTHER" id="PTHR47739:SF1">
    <property type="entry name" value="TRNA1(VAL) (ADENINE(37)-N6)-METHYLTRANSFERASE"/>
    <property type="match status" value="1"/>
</dbReference>
<dbReference type="Pfam" id="PF05175">
    <property type="entry name" value="MTS"/>
    <property type="match status" value="1"/>
</dbReference>
<dbReference type="SUPFAM" id="SSF53335">
    <property type="entry name" value="S-adenosyl-L-methionine-dependent methyltransferases"/>
    <property type="match status" value="1"/>
</dbReference>
<dbReference type="PROSITE" id="PS00092">
    <property type="entry name" value="N6_MTASE"/>
    <property type="match status" value="1"/>
</dbReference>
<gene>
    <name evidence="1" type="primary">yfiC</name>
    <name type="ordered locus">EcSMS35_2727</name>
</gene>
<sequence length="245" mass="27270">MSQSTSVLRRNGFTFKQFFVAHDRCAMKVGTDGILLGAWAPVAGVKRCLDIGAGSGLLALMLAQRTDDSVMIDAVELESEAAAQAQENINQSPWAERINVHTADIQQWITQQTVRFDLIISNPPYYQQGVECSTPQREQARYTTTLDHPSLLTCAAECITEEGFFCVVLPEQIGNGFTELALSMGWHLRLRTDVAENEARLPHRVLLAFSPQAGECFSDRLVIRGPDQNYSEAYTALTQAFYLFM</sequence>
<feature type="chain" id="PRO_0000387362" description="tRNA1(Val) (adenine(37)-N6)-methyltransferase">
    <location>
        <begin position="1"/>
        <end position="245"/>
    </location>
</feature>
<organism>
    <name type="scientific">Escherichia coli (strain SMS-3-5 / SECEC)</name>
    <dbReference type="NCBI Taxonomy" id="439855"/>
    <lineage>
        <taxon>Bacteria</taxon>
        <taxon>Pseudomonadati</taxon>
        <taxon>Pseudomonadota</taxon>
        <taxon>Gammaproteobacteria</taxon>
        <taxon>Enterobacterales</taxon>
        <taxon>Enterobacteriaceae</taxon>
        <taxon>Escherichia</taxon>
    </lineage>
</organism>
<accession>B1LP88</accession>
<name>TRMN6_ECOSM</name>
<proteinExistence type="inferred from homology"/>
<comment type="function">
    <text evidence="1">Specifically methylates the adenine in position 37 of tRNA(1)(Val) (anticodon cmo5UAC).</text>
</comment>
<comment type="catalytic activity">
    <reaction evidence="1">
        <text>adenosine(37) in tRNA1(Val) + S-adenosyl-L-methionine = N(6)-methyladenosine(37) in tRNA1(Val) + S-adenosyl-L-homocysteine + H(+)</text>
        <dbReference type="Rhea" id="RHEA:43160"/>
        <dbReference type="Rhea" id="RHEA-COMP:10369"/>
        <dbReference type="Rhea" id="RHEA-COMP:10370"/>
        <dbReference type="ChEBI" id="CHEBI:15378"/>
        <dbReference type="ChEBI" id="CHEBI:57856"/>
        <dbReference type="ChEBI" id="CHEBI:59789"/>
        <dbReference type="ChEBI" id="CHEBI:74411"/>
        <dbReference type="ChEBI" id="CHEBI:74449"/>
        <dbReference type="EC" id="2.1.1.223"/>
    </reaction>
</comment>
<comment type="subcellular location">
    <subcellularLocation>
        <location evidence="1">Cytoplasm</location>
    </subcellularLocation>
</comment>
<comment type="similarity">
    <text evidence="1">Belongs to the methyltransferase superfamily. tRNA (adenine-N(6)-)-methyltransferase family.</text>
</comment>
<keyword id="KW-0963">Cytoplasm</keyword>
<keyword id="KW-0489">Methyltransferase</keyword>
<keyword id="KW-0949">S-adenosyl-L-methionine</keyword>
<keyword id="KW-0808">Transferase</keyword>
<keyword id="KW-0819">tRNA processing</keyword>
<protein>
    <recommendedName>
        <fullName evidence="1">tRNA1(Val) (adenine(37)-N6)-methyltransferase</fullName>
        <ecNumber evidence="1">2.1.1.223</ecNumber>
    </recommendedName>
    <alternativeName>
        <fullName evidence="1">tRNA m6A37 methyltransferase</fullName>
    </alternativeName>
</protein>